<gene>
    <name type="primary">ubcB</name>
    <name type="ORF">DDB_G0284865</name>
</gene>
<protein>
    <recommendedName>
        <fullName>Ubiquitin conjugating enzyme E2 B</fullName>
        <ecNumber>2.3.2.23</ecNumber>
    </recommendedName>
    <alternativeName>
        <fullName>E2 ubiquitin-conjugating enzyme B</fullName>
    </alternativeName>
    <alternativeName>
        <fullName>UBC1</fullName>
    </alternativeName>
</protein>
<organism>
    <name type="scientific">Dictyostelium discoideum</name>
    <name type="common">Social amoeba</name>
    <dbReference type="NCBI Taxonomy" id="44689"/>
    <lineage>
        <taxon>Eukaryota</taxon>
        <taxon>Amoebozoa</taxon>
        <taxon>Evosea</taxon>
        <taxon>Eumycetozoa</taxon>
        <taxon>Dictyostelia</taxon>
        <taxon>Dictyosteliales</taxon>
        <taxon>Dictyosteliaceae</taxon>
        <taxon>Dictyostelium</taxon>
    </lineage>
</organism>
<sequence>MAAHKRLQKEITDMLKTPPSWCSAHLVDDNLQKWKATVQGPEGSPFEKGVFSMDIDIPADYPFKPPTLKFTTKIYHPNIKTSDGAICAEVFSTWSPQLKILDVLTTIRSILTDPNPDNPLETEIAQQFKTDRNAFNKTAKEWTKKYAK</sequence>
<keyword id="KW-1185">Reference proteome</keyword>
<keyword id="KW-0808">Transferase</keyword>
<keyword id="KW-0833">Ubl conjugation pathway</keyword>
<comment type="function">
    <text evidence="2 3">Involved in protein ubiquitination and degradation during development. Mediates protein ubiquitination at the mound and finger stage required for subsequent development and may be an essential component of the developmental transition between the induction of postaggregative gene expression and subsequent cell-type differentiation and morphogenesis. ubcB and ubpB differentially control ubiquitination/deubiquitination and degradation of mkkA protein in a cell-type-specific and temporally regulated manner.</text>
</comment>
<comment type="catalytic activity">
    <reaction evidence="1">
        <text>S-ubiquitinyl-[E1 ubiquitin-activating enzyme]-L-cysteine + [E2 ubiquitin-conjugating enzyme]-L-cysteine = [E1 ubiquitin-activating enzyme]-L-cysteine + S-ubiquitinyl-[E2 ubiquitin-conjugating enzyme]-L-cysteine.</text>
        <dbReference type="EC" id="2.3.2.23"/>
    </reaction>
</comment>
<comment type="pathway">
    <text evidence="1">Protein modification; protein ubiquitination.</text>
</comment>
<comment type="subunit">
    <text evidence="3">Interacts with mkkA (via F-box/WD40 repeat domains).</text>
</comment>
<comment type="disruption phenotype">
    <text evidence="2 3">The developmental pattern of protein ubiquitination is altered in null cells. Null cells are blocked in the ability to properly execute the developmental transition that occurs between the induction of postaggregative gene expression during mound formation and the induction of cell-type differentiation and subsequent morphogenesis. Null cells plated on agar form mounds with normal kinetics; however, they remain at this stage for 10 hours before forming multiple tips and fingers that then arrest. Postaggregative gene transcripts accumulate to very high levels and do not decrease significantly with time as they do in wild-type cells. Expression of cell-type-specific genes is very delayed, with the level of prespore-specific gene expression being significantly reduced compared with that in wild-type cells. Defect in the ability of null cells to participate in normal development in chimeras containing wild-type cells. Increased stablity of mkkA and similar phenotype (significant delay at the mound stage and arrest at the first finger stage) of cells that overexpress mkkA.</text>
</comment>
<comment type="similarity">
    <text evidence="1">Belongs to the ubiquitin-conjugating enzyme family.</text>
</comment>
<feature type="chain" id="PRO_0000389022" description="Ubiquitin conjugating enzyme E2 B">
    <location>
        <begin position="1"/>
        <end position="148"/>
    </location>
</feature>
<feature type="domain" description="UBC core" evidence="1">
    <location>
        <begin position="2"/>
        <end position="148"/>
    </location>
</feature>
<feature type="active site" description="Glycyl thioester intermediate" evidence="1">
    <location>
        <position position="87"/>
    </location>
</feature>
<evidence type="ECO:0000255" key="1">
    <source>
        <dbReference type="PROSITE-ProRule" id="PRU00388"/>
    </source>
</evidence>
<evidence type="ECO:0000269" key="2">
    <source>
    </source>
</evidence>
<evidence type="ECO:0000269" key="3">
    <source>
    </source>
</evidence>
<dbReference type="EC" id="2.3.2.23"/>
<dbReference type="EMBL" id="U67838">
    <property type="protein sequence ID" value="AAB08700.1"/>
    <property type="molecule type" value="Genomic_DNA"/>
</dbReference>
<dbReference type="EMBL" id="AAFI02000073">
    <property type="protein sequence ID" value="EAL64896.1"/>
    <property type="molecule type" value="Genomic_DNA"/>
</dbReference>
<dbReference type="RefSeq" id="XP_639901.1">
    <property type="nucleotide sequence ID" value="XM_634809.1"/>
</dbReference>
<dbReference type="SMR" id="Q94490"/>
<dbReference type="STRING" id="44689.Q94490"/>
<dbReference type="PaxDb" id="44689-DDB0201564"/>
<dbReference type="EnsemblProtists" id="EAL64896">
    <property type="protein sequence ID" value="EAL64896"/>
    <property type="gene ID" value="DDB_G0284865"/>
</dbReference>
<dbReference type="GeneID" id="8624813"/>
<dbReference type="KEGG" id="ddi:DDB_G0284865"/>
<dbReference type="dictyBase" id="DDB_G0284865">
    <property type="gene designation" value="ubcB"/>
</dbReference>
<dbReference type="VEuPathDB" id="AmoebaDB:DDB_G0284865"/>
<dbReference type="eggNOG" id="KOG0417">
    <property type="taxonomic scope" value="Eukaryota"/>
</dbReference>
<dbReference type="HOGENOM" id="CLU_030988_13_3_1"/>
<dbReference type="InParanoid" id="Q94490"/>
<dbReference type="PhylomeDB" id="Q94490"/>
<dbReference type="Reactome" id="R-DDI-141430">
    <property type="pathway name" value="Inactivation of APC/C via direct inhibition of the APC/C complex"/>
</dbReference>
<dbReference type="Reactome" id="R-DDI-174048">
    <property type="pathway name" value="APC/C:Cdc20 mediated degradation of Cyclin B"/>
</dbReference>
<dbReference type="Reactome" id="R-DDI-174084">
    <property type="pathway name" value="Autodegradation of Cdh1 by Cdh1:APC/C"/>
</dbReference>
<dbReference type="Reactome" id="R-DDI-174154">
    <property type="pathway name" value="APC/C:Cdc20 mediated degradation of Securin"/>
</dbReference>
<dbReference type="Reactome" id="R-DDI-174178">
    <property type="pathway name" value="APC/C:Cdh1 mediated degradation of Cdc20 and other APC/C:Cdh1 targeted proteins in late mitosis/early G1"/>
</dbReference>
<dbReference type="Reactome" id="R-DDI-174184">
    <property type="pathway name" value="Cdc20:Phospho-APC/C mediated degradation of Cyclin A"/>
</dbReference>
<dbReference type="Reactome" id="R-DDI-176407">
    <property type="pathway name" value="Conversion from APC/C:Cdc20 to APC/C:Cdh1 in late anaphase"/>
</dbReference>
<dbReference type="Reactome" id="R-DDI-176408">
    <property type="pathway name" value="Regulation of APC/C activators between G1/S and early anaphase"/>
</dbReference>
<dbReference type="Reactome" id="R-DDI-176409">
    <property type="pathway name" value="APC/C:Cdc20 mediated degradation of mitotic proteins"/>
</dbReference>
<dbReference type="Reactome" id="R-DDI-176412">
    <property type="pathway name" value="Phosphorylation of the APC/C"/>
</dbReference>
<dbReference type="Reactome" id="R-DDI-179409">
    <property type="pathway name" value="APC-Cdc20 mediated degradation of Nek2A"/>
</dbReference>
<dbReference type="Reactome" id="R-DDI-2467813">
    <property type="pathway name" value="Separation of Sister Chromatids"/>
</dbReference>
<dbReference type="Reactome" id="R-DDI-2559582">
    <property type="pathway name" value="Senescence-Associated Secretory Phenotype (SASP)"/>
</dbReference>
<dbReference type="Reactome" id="R-DDI-69017">
    <property type="pathway name" value="CDK-mediated phosphorylation and removal of Cdc6"/>
</dbReference>
<dbReference type="Reactome" id="R-DDI-8866652">
    <property type="pathway name" value="Synthesis of active ubiquitin: roles of E1 and E2 enzymes"/>
</dbReference>
<dbReference type="Reactome" id="R-DDI-8866654">
    <property type="pathway name" value="E3 ubiquitin ligases ubiquitinate target proteins"/>
</dbReference>
<dbReference type="Reactome" id="R-DDI-9033241">
    <property type="pathway name" value="Peroxisomal protein import"/>
</dbReference>
<dbReference type="Reactome" id="R-DDI-983168">
    <property type="pathway name" value="Antigen processing: Ubiquitination &amp; Proteasome degradation"/>
</dbReference>
<dbReference type="UniPathway" id="UPA00143"/>
<dbReference type="PRO" id="PR:Q94490"/>
<dbReference type="Proteomes" id="UP000002195">
    <property type="component" value="Chromosome 4"/>
</dbReference>
<dbReference type="GO" id="GO:0005634">
    <property type="term" value="C:nucleus"/>
    <property type="evidence" value="ECO:0000318"/>
    <property type="project" value="GO_Central"/>
</dbReference>
<dbReference type="GO" id="GO:0061631">
    <property type="term" value="F:ubiquitin conjugating enzyme activity"/>
    <property type="evidence" value="ECO:0000318"/>
    <property type="project" value="GO_Central"/>
</dbReference>
<dbReference type="GO" id="GO:0004842">
    <property type="term" value="F:ubiquitin-protein transferase activity"/>
    <property type="evidence" value="ECO:0000250"/>
    <property type="project" value="dictyBase"/>
</dbReference>
<dbReference type="GO" id="GO:0009653">
    <property type="term" value="P:anatomical structure morphogenesis"/>
    <property type="evidence" value="ECO:0000315"/>
    <property type="project" value="dictyBase"/>
</dbReference>
<dbReference type="GO" id="GO:0000209">
    <property type="term" value="P:protein polyubiquitination"/>
    <property type="evidence" value="ECO:0000318"/>
    <property type="project" value="GO_Central"/>
</dbReference>
<dbReference type="GO" id="GO:0016567">
    <property type="term" value="P:protein ubiquitination"/>
    <property type="evidence" value="ECO:0000314"/>
    <property type="project" value="dictyBase"/>
</dbReference>
<dbReference type="GO" id="GO:0006511">
    <property type="term" value="P:ubiquitin-dependent protein catabolic process"/>
    <property type="evidence" value="ECO:0000318"/>
    <property type="project" value="GO_Central"/>
</dbReference>
<dbReference type="FunFam" id="3.10.110.10:FF:000132">
    <property type="entry name" value="Ubiquitin-conjugating enzyme E2-17 kDa 3"/>
    <property type="match status" value="1"/>
</dbReference>
<dbReference type="Gene3D" id="3.10.110.10">
    <property type="entry name" value="Ubiquitin Conjugating Enzyme"/>
    <property type="match status" value="1"/>
</dbReference>
<dbReference type="InterPro" id="IPR000608">
    <property type="entry name" value="UBQ-conjugat_E2_core"/>
</dbReference>
<dbReference type="InterPro" id="IPR016135">
    <property type="entry name" value="UBQ-conjugating_enzyme/RWD"/>
</dbReference>
<dbReference type="PANTHER" id="PTHR24068">
    <property type="entry name" value="UBIQUITIN-CONJUGATING ENZYME E2"/>
    <property type="match status" value="1"/>
</dbReference>
<dbReference type="Pfam" id="PF00179">
    <property type="entry name" value="UQ_con"/>
    <property type="match status" value="1"/>
</dbReference>
<dbReference type="SMART" id="SM00212">
    <property type="entry name" value="UBCc"/>
    <property type="match status" value="1"/>
</dbReference>
<dbReference type="SUPFAM" id="SSF54495">
    <property type="entry name" value="UBC-like"/>
    <property type="match status" value="1"/>
</dbReference>
<dbReference type="PROSITE" id="PS50127">
    <property type="entry name" value="UBC_2"/>
    <property type="match status" value="1"/>
</dbReference>
<accession>Q94490</accession>
<accession>Q54P16</accession>
<reference key="1">
    <citation type="journal article" date="1997" name="Mol. Biol. Cell">
        <title>A ubiquitin-conjugating enzyme is essential for developmental transitions in Dictyostelium.</title>
        <authorList>
            <person name="Clark A."/>
            <person name="Nomura A."/>
            <person name="Mohanty S."/>
            <person name="Firtel R.A."/>
        </authorList>
    </citation>
    <scope>NUCLEOTIDE SEQUENCE [GENOMIC DNA]</scope>
    <scope>FUNCTION</scope>
    <scope>DISRUPTION PHENOTYPE</scope>
    <source>
        <strain>AX3</strain>
    </source>
</reference>
<reference key="2">
    <citation type="journal article" date="2005" name="Nature">
        <title>The genome of the social amoeba Dictyostelium discoideum.</title>
        <authorList>
            <person name="Eichinger L."/>
            <person name="Pachebat J.A."/>
            <person name="Gloeckner G."/>
            <person name="Rajandream M.A."/>
            <person name="Sucgang R."/>
            <person name="Berriman M."/>
            <person name="Song J."/>
            <person name="Olsen R."/>
            <person name="Szafranski K."/>
            <person name="Xu Q."/>
            <person name="Tunggal B."/>
            <person name="Kummerfeld S."/>
            <person name="Madera M."/>
            <person name="Konfortov B.A."/>
            <person name="Rivero F."/>
            <person name="Bankier A.T."/>
            <person name="Lehmann R."/>
            <person name="Hamlin N."/>
            <person name="Davies R."/>
            <person name="Gaudet P."/>
            <person name="Fey P."/>
            <person name="Pilcher K."/>
            <person name="Chen G."/>
            <person name="Saunders D."/>
            <person name="Sodergren E.J."/>
            <person name="Davis P."/>
            <person name="Kerhornou A."/>
            <person name="Nie X."/>
            <person name="Hall N."/>
            <person name="Anjard C."/>
            <person name="Hemphill L."/>
            <person name="Bason N."/>
            <person name="Farbrother P."/>
            <person name="Desany B."/>
            <person name="Just E."/>
            <person name="Morio T."/>
            <person name="Rost R."/>
            <person name="Churcher C.M."/>
            <person name="Cooper J."/>
            <person name="Haydock S."/>
            <person name="van Driessche N."/>
            <person name="Cronin A."/>
            <person name="Goodhead I."/>
            <person name="Muzny D.M."/>
            <person name="Mourier T."/>
            <person name="Pain A."/>
            <person name="Lu M."/>
            <person name="Harper D."/>
            <person name="Lindsay R."/>
            <person name="Hauser H."/>
            <person name="James K.D."/>
            <person name="Quiles M."/>
            <person name="Madan Babu M."/>
            <person name="Saito T."/>
            <person name="Buchrieser C."/>
            <person name="Wardroper A."/>
            <person name="Felder M."/>
            <person name="Thangavelu M."/>
            <person name="Johnson D."/>
            <person name="Knights A."/>
            <person name="Loulseged H."/>
            <person name="Mungall K.L."/>
            <person name="Oliver K."/>
            <person name="Price C."/>
            <person name="Quail M.A."/>
            <person name="Urushihara H."/>
            <person name="Hernandez J."/>
            <person name="Rabbinowitsch E."/>
            <person name="Steffen D."/>
            <person name="Sanders M."/>
            <person name="Ma J."/>
            <person name="Kohara Y."/>
            <person name="Sharp S."/>
            <person name="Simmonds M.N."/>
            <person name="Spiegler S."/>
            <person name="Tivey A."/>
            <person name="Sugano S."/>
            <person name="White B."/>
            <person name="Walker D."/>
            <person name="Woodward J.R."/>
            <person name="Winckler T."/>
            <person name="Tanaka Y."/>
            <person name="Shaulsky G."/>
            <person name="Schleicher M."/>
            <person name="Weinstock G.M."/>
            <person name="Rosenthal A."/>
            <person name="Cox E.C."/>
            <person name="Chisholm R.L."/>
            <person name="Gibbs R.A."/>
            <person name="Loomis W.F."/>
            <person name="Platzer M."/>
            <person name="Kay R.R."/>
            <person name="Williams J.G."/>
            <person name="Dear P.H."/>
            <person name="Noegel A.A."/>
            <person name="Barrell B.G."/>
            <person name="Kuspa A."/>
        </authorList>
    </citation>
    <scope>NUCLEOTIDE SEQUENCE [LARGE SCALE GENOMIC DNA]</scope>
    <source>
        <strain>AX4</strain>
    </source>
</reference>
<reference key="3">
    <citation type="journal article" date="1998" name="Genes Dev.">
        <title>A novel, putative MEK kinase controls developmental timing and spatial patterning in Dictyostelium and is regulated by ubiquitin-mediated protein degradation.</title>
        <authorList>
            <person name="Chung C.Y."/>
            <person name="Reddy T.B.K."/>
            <person name="Zhou K."/>
            <person name="Firtel R.A."/>
        </authorList>
    </citation>
    <scope>FUNCTION</scope>
    <scope>INTERACTION WITH MKKA</scope>
    <scope>DISRUPTION PHENOTYPE</scope>
    <source>
        <strain>AX3</strain>
    </source>
</reference>
<name>UBCB_DICDI</name>
<proteinExistence type="evidence at protein level"/>